<dbReference type="EMBL" id="AB024303">
    <property type="protein sequence ID" value="BAA82876.1"/>
    <property type="molecule type" value="mRNA"/>
</dbReference>
<dbReference type="EMBL" id="AK010313">
    <property type="protein sequence ID" value="BAB26845.1"/>
    <property type="molecule type" value="mRNA"/>
</dbReference>
<dbReference type="EMBL" id="AK011783">
    <property type="protein sequence ID" value="BAB27838.1"/>
    <property type="molecule type" value="mRNA"/>
</dbReference>
<dbReference type="EMBL" id="AK087556">
    <property type="protein sequence ID" value="BAC39925.1"/>
    <property type="molecule type" value="mRNA"/>
</dbReference>
<dbReference type="EMBL" id="AK090012">
    <property type="protein sequence ID" value="BAC41044.1"/>
    <property type="molecule type" value="mRNA"/>
</dbReference>
<dbReference type="EMBL" id="AK154139">
    <property type="protein sequence ID" value="BAE32401.1"/>
    <property type="molecule type" value="mRNA"/>
</dbReference>
<dbReference type="EMBL" id="AK159672">
    <property type="protein sequence ID" value="BAE35276.1"/>
    <property type="molecule type" value="mRNA"/>
</dbReference>
<dbReference type="EMBL" id="AK162789">
    <property type="protein sequence ID" value="BAE37060.1"/>
    <property type="molecule type" value="mRNA"/>
</dbReference>
<dbReference type="EMBL" id="BC068164">
    <property type="protein sequence ID" value="AAH68164.1"/>
    <property type="molecule type" value="mRNA"/>
</dbReference>
<dbReference type="CCDS" id="CCDS20848.1">
    <molecule id="Q9R1T2-1"/>
</dbReference>
<dbReference type="CCDS" id="CCDS85221.1">
    <molecule id="Q9R1T2-2"/>
</dbReference>
<dbReference type="RefSeq" id="NP_001272820.1">
    <molecule id="Q9R1T2-1"/>
    <property type="nucleotide sequence ID" value="NM_001285891.1"/>
</dbReference>
<dbReference type="RefSeq" id="NP_001272821.1">
    <molecule id="Q9R1T2-2"/>
    <property type="nucleotide sequence ID" value="NM_001285892.1"/>
</dbReference>
<dbReference type="RefSeq" id="NP_062722.1">
    <molecule id="Q9R1T2-1"/>
    <property type="nucleotide sequence ID" value="NM_019748.3"/>
</dbReference>
<dbReference type="SMR" id="Q9R1T2"/>
<dbReference type="BioGRID" id="207998">
    <property type="interactions" value="36"/>
</dbReference>
<dbReference type="ComplexPortal" id="CPX-3041">
    <property type="entry name" value="SUMO activating enzyme complex, SAE1-UBA2"/>
</dbReference>
<dbReference type="FunCoup" id="Q9R1T2">
    <property type="interactions" value="4840"/>
</dbReference>
<dbReference type="IntAct" id="Q9R1T2">
    <property type="interactions" value="1"/>
</dbReference>
<dbReference type="MINT" id="Q9R1T2"/>
<dbReference type="STRING" id="10090.ENSMUSP00000092409"/>
<dbReference type="GlyGen" id="Q9R1T2">
    <property type="glycosylation" value="1 site, 1 O-linked glycan (1 site)"/>
</dbReference>
<dbReference type="iPTMnet" id="Q9R1T2"/>
<dbReference type="PhosphoSitePlus" id="Q9R1T2"/>
<dbReference type="SwissPalm" id="Q9R1T2"/>
<dbReference type="REPRODUCTION-2DPAGE" id="Q9R1T2"/>
<dbReference type="jPOST" id="Q9R1T2"/>
<dbReference type="PaxDb" id="10090-ENSMUSP00000092409"/>
<dbReference type="PeptideAtlas" id="Q9R1T2"/>
<dbReference type="ProteomicsDB" id="256688">
    <molecule id="Q9R1T2-1"/>
</dbReference>
<dbReference type="ProteomicsDB" id="256689">
    <molecule id="Q9R1T2-2"/>
</dbReference>
<dbReference type="Pumba" id="Q9R1T2"/>
<dbReference type="Antibodypedia" id="18168">
    <property type="antibodies" value="548 antibodies from 45 providers"/>
</dbReference>
<dbReference type="DNASU" id="56459"/>
<dbReference type="Ensembl" id="ENSMUST00000094815.5">
    <molecule id="Q9R1T2-1"/>
    <property type="protein sequence ID" value="ENSMUSP00000092409.4"/>
    <property type="gene ID" value="ENSMUSG00000052833.10"/>
</dbReference>
<dbReference type="Ensembl" id="ENSMUST00000210999.2">
    <molecule id="Q9R1T2-1"/>
    <property type="protein sequence ID" value="ENSMUSP00000147409.2"/>
    <property type="gene ID" value="ENSMUSG00000052833.10"/>
</dbReference>
<dbReference type="Ensembl" id="ENSMUST00000211741.2">
    <molecule id="Q9R1T2-2"/>
    <property type="protein sequence ID" value="ENSMUSP00000147771.2"/>
    <property type="gene ID" value="ENSMUSG00000052833.10"/>
</dbReference>
<dbReference type="GeneID" id="56459"/>
<dbReference type="KEGG" id="mmu:56459"/>
<dbReference type="UCSC" id="uc009fhp.2">
    <molecule id="Q9R1T2-1"/>
    <property type="organism name" value="mouse"/>
</dbReference>
<dbReference type="UCSC" id="uc009fhq.2">
    <molecule id="Q9R1T2-2"/>
    <property type="organism name" value="mouse"/>
</dbReference>
<dbReference type="AGR" id="MGI:1929264"/>
<dbReference type="CTD" id="10055"/>
<dbReference type="MGI" id="MGI:1929264">
    <property type="gene designation" value="Sae1"/>
</dbReference>
<dbReference type="VEuPathDB" id="HostDB:ENSMUSG00000052833"/>
<dbReference type="eggNOG" id="KOG2014">
    <property type="taxonomic scope" value="Eukaryota"/>
</dbReference>
<dbReference type="GeneTree" id="ENSGT00550000075007"/>
<dbReference type="HOGENOM" id="CLU_002556_4_0_1"/>
<dbReference type="InParanoid" id="Q9R1T2"/>
<dbReference type="OMA" id="EFFGQFD"/>
<dbReference type="OrthoDB" id="412647at2759"/>
<dbReference type="PhylomeDB" id="Q9R1T2"/>
<dbReference type="TreeFam" id="TF315037"/>
<dbReference type="Reactome" id="R-MMU-3065676">
    <property type="pathway name" value="SUMO is conjugated to E1 (UBA2:SAE1)"/>
</dbReference>
<dbReference type="Reactome" id="R-MMU-3065678">
    <property type="pathway name" value="SUMO is transferred from E1 to E2 (UBE2I, UBC9)"/>
</dbReference>
<dbReference type="UniPathway" id="UPA00886"/>
<dbReference type="BioGRID-ORCS" id="56459">
    <property type="hits" value="26 hits in 76 CRISPR screens"/>
</dbReference>
<dbReference type="ChiTaRS" id="Sae1">
    <property type="organism name" value="mouse"/>
</dbReference>
<dbReference type="PRO" id="PR:Q9R1T2"/>
<dbReference type="Proteomes" id="UP000000589">
    <property type="component" value="Chromosome 7"/>
</dbReference>
<dbReference type="RNAct" id="Q9R1T2">
    <property type="molecule type" value="protein"/>
</dbReference>
<dbReference type="Bgee" id="ENSMUSG00000052833">
    <property type="expression patterns" value="Expressed in ventricular zone and 275 other cell types or tissues"/>
</dbReference>
<dbReference type="GO" id="GO:0005654">
    <property type="term" value="C:nucleoplasm"/>
    <property type="evidence" value="ECO:0007669"/>
    <property type="project" value="Ensembl"/>
</dbReference>
<dbReference type="GO" id="GO:0031510">
    <property type="term" value="C:SUMO activating enzyme complex"/>
    <property type="evidence" value="ECO:0000314"/>
    <property type="project" value="MGI"/>
</dbReference>
<dbReference type="GO" id="GO:0043008">
    <property type="term" value="F:ATP-dependent protein binding"/>
    <property type="evidence" value="ECO:0007669"/>
    <property type="project" value="Ensembl"/>
</dbReference>
<dbReference type="GO" id="GO:0046982">
    <property type="term" value="F:protein heterodimerization activity"/>
    <property type="evidence" value="ECO:0007669"/>
    <property type="project" value="Ensembl"/>
</dbReference>
<dbReference type="GO" id="GO:0044388">
    <property type="term" value="F:small protein activating enzyme binding"/>
    <property type="evidence" value="ECO:0007669"/>
    <property type="project" value="Ensembl"/>
</dbReference>
<dbReference type="GO" id="GO:0019948">
    <property type="term" value="F:SUMO activating enzyme activity"/>
    <property type="evidence" value="ECO:0007669"/>
    <property type="project" value="Ensembl"/>
</dbReference>
<dbReference type="GO" id="GO:0033235">
    <property type="term" value="P:positive regulation of protein sumoylation"/>
    <property type="evidence" value="ECO:0007669"/>
    <property type="project" value="Ensembl"/>
</dbReference>
<dbReference type="GO" id="GO:0016925">
    <property type="term" value="P:protein sumoylation"/>
    <property type="evidence" value="ECO:0000250"/>
    <property type="project" value="UniProtKB"/>
</dbReference>
<dbReference type="CDD" id="cd01492">
    <property type="entry name" value="Aos1_SUMO"/>
    <property type="match status" value="1"/>
</dbReference>
<dbReference type="FunFam" id="3.40.50.720:FF:000274">
    <property type="entry name" value="SUMO-activating enzyme subunit 1 isoform X1"/>
    <property type="match status" value="1"/>
</dbReference>
<dbReference type="Gene3D" id="3.40.50.720">
    <property type="entry name" value="NAD(P)-binding Rossmann-like Domain"/>
    <property type="match status" value="1"/>
</dbReference>
<dbReference type="InterPro" id="IPR045886">
    <property type="entry name" value="ThiF/MoeB/HesA"/>
</dbReference>
<dbReference type="InterPro" id="IPR000594">
    <property type="entry name" value="ThiF_NAD_FAD-bd"/>
</dbReference>
<dbReference type="InterPro" id="IPR035985">
    <property type="entry name" value="Ubiquitin-activating_enz"/>
</dbReference>
<dbReference type="InterPro" id="IPR000011">
    <property type="entry name" value="UBQ/SUMO-activ_enz_E1-like"/>
</dbReference>
<dbReference type="PANTHER" id="PTHR10953:SF162">
    <property type="entry name" value="SUMO-ACTIVATING ENZYME SUBUNIT 1"/>
    <property type="match status" value="1"/>
</dbReference>
<dbReference type="PANTHER" id="PTHR10953">
    <property type="entry name" value="UBIQUITIN-ACTIVATING ENZYME E1"/>
    <property type="match status" value="1"/>
</dbReference>
<dbReference type="Pfam" id="PF00899">
    <property type="entry name" value="ThiF"/>
    <property type="match status" value="1"/>
</dbReference>
<dbReference type="PRINTS" id="PR01849">
    <property type="entry name" value="UBIQUITINACT"/>
</dbReference>
<dbReference type="SUPFAM" id="SSF69572">
    <property type="entry name" value="Activating enzymes of the ubiquitin-like proteins"/>
    <property type="match status" value="1"/>
</dbReference>
<organism>
    <name type="scientific">Mus musculus</name>
    <name type="common">Mouse</name>
    <dbReference type="NCBI Taxonomy" id="10090"/>
    <lineage>
        <taxon>Eukaryota</taxon>
        <taxon>Metazoa</taxon>
        <taxon>Chordata</taxon>
        <taxon>Craniata</taxon>
        <taxon>Vertebrata</taxon>
        <taxon>Euteleostomi</taxon>
        <taxon>Mammalia</taxon>
        <taxon>Eutheria</taxon>
        <taxon>Euarchontoglires</taxon>
        <taxon>Glires</taxon>
        <taxon>Rodentia</taxon>
        <taxon>Myomorpha</taxon>
        <taxon>Muroidea</taxon>
        <taxon>Muridae</taxon>
        <taxon>Murinae</taxon>
        <taxon>Mus</taxon>
        <taxon>Mus</taxon>
    </lineage>
</organism>
<accession>Q9R1T2</accession>
<accession>Q3TRG9</accession>
<accession>Q3TWJ0</accession>
<accession>Q9CSW9</accession>
<proteinExistence type="evidence at protein level"/>
<keyword id="KW-0007">Acetylation</keyword>
<keyword id="KW-0025">Alternative splicing</keyword>
<keyword id="KW-0436">Ligase</keyword>
<keyword id="KW-0539">Nucleus</keyword>
<keyword id="KW-0597">Phosphoprotein</keyword>
<keyword id="KW-1185">Reference proteome</keyword>
<keyword id="KW-0833">Ubl conjugation pathway</keyword>
<protein>
    <recommendedName>
        <fullName>SUMO-activating enzyme subunit 1</fullName>
    </recommendedName>
    <alternativeName>
        <fullName>Ubiquitin-like 1-activating enzyme E1A</fullName>
    </alternativeName>
    <component>
        <recommendedName>
            <fullName>SUMO-activating enzyme subunit 1, N-terminally processed</fullName>
        </recommendedName>
    </component>
</protein>
<name>SAE1_MOUSE</name>
<gene>
    <name type="primary">Sae1</name>
    <name type="synonym">Aos1</name>
    <name type="synonym">Sua1</name>
    <name type="synonym">Ubl1a1</name>
    <name type="synonym">Uble1a</name>
</gene>
<evidence type="ECO:0000250" key="1"/>
<evidence type="ECO:0000250" key="2">
    <source>
        <dbReference type="UniProtKB" id="Q9UBE0"/>
    </source>
</evidence>
<evidence type="ECO:0000269" key="3">
    <source>
    </source>
</evidence>
<evidence type="ECO:0000303" key="4">
    <source>
    </source>
</evidence>
<evidence type="ECO:0000305" key="5"/>
<evidence type="ECO:0007744" key="6">
    <source>
    </source>
</evidence>
<feature type="chain" id="PRO_0000423291" description="SUMO-activating enzyme subunit 1">
    <location>
        <begin position="1"/>
        <end position="350"/>
    </location>
</feature>
<feature type="initiator methionine" description="Removed; alternate" evidence="2">
    <location>
        <position position="1"/>
    </location>
</feature>
<feature type="chain" id="PRO_0000194967" description="SUMO-activating enzyme subunit 1, N-terminally processed">
    <location>
        <begin position="2"/>
        <end position="350"/>
    </location>
</feature>
<feature type="modified residue" description="N-acetylmethionine" evidence="2">
    <location>
        <position position="1"/>
    </location>
</feature>
<feature type="modified residue" description="N-acetylvaline; in SUMO-activating enzyme subunit 1, N-terminally processed" evidence="2">
    <location>
        <position position="2"/>
    </location>
</feature>
<feature type="modified residue" description="Phosphoserine" evidence="2">
    <location>
        <position position="16"/>
    </location>
</feature>
<feature type="modified residue" description="N6-acetyllysine" evidence="6">
    <location>
        <position position="202"/>
    </location>
</feature>
<feature type="splice variant" id="VSP_022004" description="In isoform 2." evidence="4">
    <original>ALSQRDPPHNNFFFFDGMKGSGIVECLGPQ</original>
    <variation>VCLGTMCV</variation>
    <location>
        <begin position="321"/>
        <end position="350"/>
    </location>
</feature>
<sequence length="350" mass="38620">MVEKEEAGGGGGGGISEEEAAQYDRQIRLWGLEAQKRLRASRVLIVGMKGLGAEIAKNLILAGVKGLTMLDHEQVSPEDPGAQFLIQTGSVGRNRAEASLERAQNLNPMVDVKVDTEDVEKKPESFFTKFDAVCLTCCSRDVIIKVDQICHRNSIKFFTGDVFGYHGYTFANLGEHEFVEEKTKVAKVSQGVEDGPEAKRAKLDSSETTMVKKKVLFCPVKEALEVDWSGEKAKAALKRTAPDYFLLQVLLKFRTDKGRDPTSESYKEDAELLLQIRNDVFDSLGISPDLLPDDFVRYCFSEMAPVCAVVGGILAQEIVKALSQRDPPHNNFFFFDGMKGSGIVECLGPQ</sequence>
<comment type="function">
    <text evidence="1">The heterodimer acts as an E1 ligase for SUMO1, SUMO2, SUMO3, and probably SUMO4. It mediates ATP-dependent activation of SUMO proteins followed by formation of a thioester bond between a SUMO protein and a conserved active site cysteine residue on UBA2/SAE2 (By similarity).</text>
</comment>
<comment type="pathway">
    <text>Protein modification; protein sumoylation.</text>
</comment>
<comment type="subunit">
    <text evidence="1">Heterodimer of SAE1 and UBA2/SAE2. The heterodimer corresponds to the two domains that are encoded on a single polypeptide chain in ubiquitin-activating enzyme E1. Interacts with UBE2I (By similarity).</text>
</comment>
<comment type="subcellular location">
    <subcellularLocation>
        <location evidence="1">Nucleus</location>
    </subcellularLocation>
</comment>
<comment type="alternative products">
    <event type="alternative splicing"/>
    <isoform>
        <id>Q9R1T2-1</id>
        <name>1</name>
        <sequence type="displayed"/>
    </isoform>
    <isoform>
        <id>Q9R1T2-2</id>
        <name>2</name>
        <sequence type="described" ref="VSP_022004"/>
    </isoform>
</comment>
<comment type="tissue specificity">
    <text evidence="3">Broadly expressed, with highest levels in testis.</text>
</comment>
<comment type="similarity">
    <text evidence="5">Belongs to the ubiquitin-activating E1 family.</text>
</comment>
<reference key="1">
    <citation type="submission" date="1999-02" db="EMBL/GenBank/DDBJ databases">
        <title>Mus musculus cDNA similar to human Sua1 complete cds, complete cds.</title>
        <authorList>
            <person name="Kaneta Y."/>
            <person name="Takada S."/>
            <person name="Itoh M."/>
            <person name="Takagi N."/>
        </authorList>
    </citation>
    <scope>NUCLEOTIDE SEQUENCE [MRNA] (ISOFORM 1)</scope>
</reference>
<reference key="2">
    <citation type="journal article" date="2005" name="Science">
        <title>The transcriptional landscape of the mammalian genome.</title>
        <authorList>
            <person name="Carninci P."/>
            <person name="Kasukawa T."/>
            <person name="Katayama S."/>
            <person name="Gough J."/>
            <person name="Frith M.C."/>
            <person name="Maeda N."/>
            <person name="Oyama R."/>
            <person name="Ravasi T."/>
            <person name="Lenhard B."/>
            <person name="Wells C."/>
            <person name="Kodzius R."/>
            <person name="Shimokawa K."/>
            <person name="Bajic V.B."/>
            <person name="Brenner S.E."/>
            <person name="Batalov S."/>
            <person name="Forrest A.R."/>
            <person name="Zavolan M."/>
            <person name="Davis M.J."/>
            <person name="Wilming L.G."/>
            <person name="Aidinis V."/>
            <person name="Allen J.E."/>
            <person name="Ambesi-Impiombato A."/>
            <person name="Apweiler R."/>
            <person name="Aturaliya R.N."/>
            <person name="Bailey T.L."/>
            <person name="Bansal M."/>
            <person name="Baxter L."/>
            <person name="Beisel K.W."/>
            <person name="Bersano T."/>
            <person name="Bono H."/>
            <person name="Chalk A.M."/>
            <person name="Chiu K.P."/>
            <person name="Choudhary V."/>
            <person name="Christoffels A."/>
            <person name="Clutterbuck D.R."/>
            <person name="Crowe M.L."/>
            <person name="Dalla E."/>
            <person name="Dalrymple B.P."/>
            <person name="de Bono B."/>
            <person name="Della Gatta G."/>
            <person name="di Bernardo D."/>
            <person name="Down T."/>
            <person name="Engstrom P."/>
            <person name="Fagiolini M."/>
            <person name="Faulkner G."/>
            <person name="Fletcher C.F."/>
            <person name="Fukushima T."/>
            <person name="Furuno M."/>
            <person name="Futaki S."/>
            <person name="Gariboldi M."/>
            <person name="Georgii-Hemming P."/>
            <person name="Gingeras T.R."/>
            <person name="Gojobori T."/>
            <person name="Green R.E."/>
            <person name="Gustincich S."/>
            <person name="Harbers M."/>
            <person name="Hayashi Y."/>
            <person name="Hensch T.K."/>
            <person name="Hirokawa N."/>
            <person name="Hill D."/>
            <person name="Huminiecki L."/>
            <person name="Iacono M."/>
            <person name="Ikeo K."/>
            <person name="Iwama A."/>
            <person name="Ishikawa T."/>
            <person name="Jakt M."/>
            <person name="Kanapin A."/>
            <person name="Katoh M."/>
            <person name="Kawasawa Y."/>
            <person name="Kelso J."/>
            <person name="Kitamura H."/>
            <person name="Kitano H."/>
            <person name="Kollias G."/>
            <person name="Krishnan S.P."/>
            <person name="Kruger A."/>
            <person name="Kummerfeld S.K."/>
            <person name="Kurochkin I.V."/>
            <person name="Lareau L.F."/>
            <person name="Lazarevic D."/>
            <person name="Lipovich L."/>
            <person name="Liu J."/>
            <person name="Liuni S."/>
            <person name="McWilliam S."/>
            <person name="Madan Babu M."/>
            <person name="Madera M."/>
            <person name="Marchionni L."/>
            <person name="Matsuda H."/>
            <person name="Matsuzawa S."/>
            <person name="Miki H."/>
            <person name="Mignone F."/>
            <person name="Miyake S."/>
            <person name="Morris K."/>
            <person name="Mottagui-Tabar S."/>
            <person name="Mulder N."/>
            <person name="Nakano N."/>
            <person name="Nakauchi H."/>
            <person name="Ng P."/>
            <person name="Nilsson R."/>
            <person name="Nishiguchi S."/>
            <person name="Nishikawa S."/>
            <person name="Nori F."/>
            <person name="Ohara O."/>
            <person name="Okazaki Y."/>
            <person name="Orlando V."/>
            <person name="Pang K.C."/>
            <person name="Pavan W.J."/>
            <person name="Pavesi G."/>
            <person name="Pesole G."/>
            <person name="Petrovsky N."/>
            <person name="Piazza S."/>
            <person name="Reed J."/>
            <person name="Reid J.F."/>
            <person name="Ring B.Z."/>
            <person name="Ringwald M."/>
            <person name="Rost B."/>
            <person name="Ruan Y."/>
            <person name="Salzberg S.L."/>
            <person name="Sandelin A."/>
            <person name="Schneider C."/>
            <person name="Schoenbach C."/>
            <person name="Sekiguchi K."/>
            <person name="Semple C.A."/>
            <person name="Seno S."/>
            <person name="Sessa L."/>
            <person name="Sheng Y."/>
            <person name="Shibata Y."/>
            <person name="Shimada H."/>
            <person name="Shimada K."/>
            <person name="Silva D."/>
            <person name="Sinclair B."/>
            <person name="Sperling S."/>
            <person name="Stupka E."/>
            <person name="Sugiura K."/>
            <person name="Sultana R."/>
            <person name="Takenaka Y."/>
            <person name="Taki K."/>
            <person name="Tammoja K."/>
            <person name="Tan S.L."/>
            <person name="Tang S."/>
            <person name="Taylor M.S."/>
            <person name="Tegner J."/>
            <person name="Teichmann S.A."/>
            <person name="Ueda H.R."/>
            <person name="van Nimwegen E."/>
            <person name="Verardo R."/>
            <person name="Wei C.L."/>
            <person name="Yagi K."/>
            <person name="Yamanishi H."/>
            <person name="Zabarovsky E."/>
            <person name="Zhu S."/>
            <person name="Zimmer A."/>
            <person name="Hide W."/>
            <person name="Bult C."/>
            <person name="Grimmond S.M."/>
            <person name="Teasdale R.D."/>
            <person name="Liu E.T."/>
            <person name="Brusic V."/>
            <person name="Quackenbush J."/>
            <person name="Wahlestedt C."/>
            <person name="Mattick J.S."/>
            <person name="Hume D.A."/>
            <person name="Kai C."/>
            <person name="Sasaki D."/>
            <person name="Tomaru Y."/>
            <person name="Fukuda S."/>
            <person name="Kanamori-Katayama M."/>
            <person name="Suzuki M."/>
            <person name="Aoki J."/>
            <person name="Arakawa T."/>
            <person name="Iida J."/>
            <person name="Imamura K."/>
            <person name="Itoh M."/>
            <person name="Kato T."/>
            <person name="Kawaji H."/>
            <person name="Kawagashira N."/>
            <person name="Kawashima T."/>
            <person name="Kojima M."/>
            <person name="Kondo S."/>
            <person name="Konno H."/>
            <person name="Nakano K."/>
            <person name="Ninomiya N."/>
            <person name="Nishio T."/>
            <person name="Okada M."/>
            <person name="Plessy C."/>
            <person name="Shibata K."/>
            <person name="Shiraki T."/>
            <person name="Suzuki S."/>
            <person name="Tagami M."/>
            <person name="Waki K."/>
            <person name="Watahiki A."/>
            <person name="Okamura-Oho Y."/>
            <person name="Suzuki H."/>
            <person name="Kawai J."/>
            <person name="Hayashizaki Y."/>
        </authorList>
    </citation>
    <scope>NUCLEOTIDE SEQUENCE [LARGE SCALE MRNA] (ISOFORMS 1 AND 2)</scope>
    <source>
        <strain>BALB/cJ</strain>
        <strain>C57BL/6J</strain>
        <strain>NOD</strain>
        <tissue>Embryo</tissue>
        <tissue>Embryonic stem cell</tissue>
        <tissue>Eye</tissue>
        <tissue>Thymus</tissue>
    </source>
</reference>
<reference key="3">
    <citation type="journal article" date="2004" name="Genome Res.">
        <title>The status, quality, and expansion of the NIH full-length cDNA project: the Mammalian Gene Collection (MGC).</title>
        <authorList>
            <consortium name="The MGC Project Team"/>
        </authorList>
    </citation>
    <scope>NUCLEOTIDE SEQUENCE [LARGE SCALE MRNA] (ISOFORM 1)</scope>
    <source>
        <strain>C57BL/6J</strain>
        <tissue>Brain</tissue>
    </source>
</reference>
<reference key="4">
    <citation type="journal article" date="2001" name="FASEB J.">
        <title>Expression and regulation of the mammalian SUMO-1 E1 enzyme.</title>
        <authorList>
            <person name="Azuma Y."/>
            <person name="Tan S.-H."/>
            <person name="Cavenagh M.M."/>
            <person name="Ainsztein A.M."/>
            <person name="Saitoh H."/>
            <person name="Dasso M."/>
        </authorList>
    </citation>
    <scope>IDENTIFICATION</scope>
    <scope>TISSUE SPECIFICITY</scope>
</reference>
<reference key="5">
    <citation type="journal article" date="2010" name="Cell">
        <title>A tissue-specific atlas of mouse protein phosphorylation and expression.</title>
        <authorList>
            <person name="Huttlin E.L."/>
            <person name="Jedrychowski M.P."/>
            <person name="Elias J.E."/>
            <person name="Goswami T."/>
            <person name="Rad R."/>
            <person name="Beausoleil S.A."/>
            <person name="Villen J."/>
            <person name="Haas W."/>
            <person name="Sowa M.E."/>
            <person name="Gygi S.P."/>
        </authorList>
    </citation>
    <scope>IDENTIFICATION BY MASS SPECTROMETRY [LARGE SCALE ANALYSIS]</scope>
    <source>
        <tissue>Brain</tissue>
        <tissue>Brown adipose tissue</tissue>
        <tissue>Heart</tissue>
        <tissue>Kidney</tissue>
        <tissue>Liver</tissue>
        <tissue>Lung</tissue>
        <tissue>Pancreas</tissue>
        <tissue>Spleen</tissue>
        <tissue>Testis</tissue>
    </source>
</reference>
<reference key="6">
    <citation type="journal article" date="2013" name="Mol. Cell">
        <title>SIRT5-mediated lysine desuccinylation impacts diverse metabolic pathways.</title>
        <authorList>
            <person name="Park J."/>
            <person name="Chen Y."/>
            <person name="Tishkoff D.X."/>
            <person name="Peng C."/>
            <person name="Tan M."/>
            <person name="Dai L."/>
            <person name="Xie Z."/>
            <person name="Zhang Y."/>
            <person name="Zwaans B.M."/>
            <person name="Skinner M.E."/>
            <person name="Lombard D.B."/>
            <person name="Zhao Y."/>
        </authorList>
    </citation>
    <scope>ACETYLATION [LARGE SCALE ANALYSIS] AT LYS-202</scope>
    <scope>IDENTIFICATION BY MASS SPECTROMETRY [LARGE SCALE ANALYSIS]</scope>
    <source>
        <tissue>Embryonic fibroblast</tissue>
    </source>
</reference>